<proteinExistence type="inferred from homology"/>
<reference key="1">
    <citation type="journal article" date="2006" name="J. Bacteriol.">
        <title>Comparative genomic analysis of three strains of Ehrlichia ruminantium reveals an active process of genome size plasticity.</title>
        <authorList>
            <person name="Frutos R."/>
            <person name="Viari A."/>
            <person name="Ferraz C."/>
            <person name="Morgat A."/>
            <person name="Eychenie S."/>
            <person name="Kandassamy Y."/>
            <person name="Chantal I."/>
            <person name="Bensaid A."/>
            <person name="Coissac E."/>
            <person name="Vachiery N."/>
            <person name="Demaille J."/>
            <person name="Martinez D."/>
        </authorList>
    </citation>
    <scope>NUCLEOTIDE SEQUENCE [LARGE SCALE GENOMIC DNA]</scope>
    <source>
        <strain>Gardel</strain>
    </source>
</reference>
<gene>
    <name evidence="1" type="primary">pdxJ</name>
    <name type="ordered locus">ERGA_CDS_02920</name>
</gene>
<dbReference type="EC" id="2.6.99.2" evidence="1"/>
<dbReference type="EMBL" id="CR925677">
    <property type="protein sequence ID" value="CAI27744.1"/>
    <property type="molecule type" value="Genomic_DNA"/>
</dbReference>
<dbReference type="RefSeq" id="WP_011255450.1">
    <property type="nucleotide sequence ID" value="NC_006831.1"/>
</dbReference>
<dbReference type="SMR" id="Q5FHH4"/>
<dbReference type="KEGG" id="erg:ERGA_CDS_02920"/>
<dbReference type="HOGENOM" id="CLU_074563_0_0_5"/>
<dbReference type="OrthoDB" id="9806590at2"/>
<dbReference type="UniPathway" id="UPA00244">
    <property type="reaction ID" value="UER00313"/>
</dbReference>
<dbReference type="Proteomes" id="UP000000533">
    <property type="component" value="Chromosome"/>
</dbReference>
<dbReference type="GO" id="GO:0005829">
    <property type="term" value="C:cytosol"/>
    <property type="evidence" value="ECO:0007669"/>
    <property type="project" value="TreeGrafter"/>
</dbReference>
<dbReference type="GO" id="GO:0033856">
    <property type="term" value="F:pyridoxine 5'-phosphate synthase activity"/>
    <property type="evidence" value="ECO:0007669"/>
    <property type="project" value="UniProtKB-EC"/>
</dbReference>
<dbReference type="GO" id="GO:0008615">
    <property type="term" value="P:pyridoxine biosynthetic process"/>
    <property type="evidence" value="ECO:0007669"/>
    <property type="project" value="UniProtKB-UniRule"/>
</dbReference>
<dbReference type="CDD" id="cd00003">
    <property type="entry name" value="PNPsynthase"/>
    <property type="match status" value="1"/>
</dbReference>
<dbReference type="Gene3D" id="3.20.20.70">
    <property type="entry name" value="Aldolase class I"/>
    <property type="match status" value="1"/>
</dbReference>
<dbReference type="HAMAP" id="MF_00279">
    <property type="entry name" value="PdxJ"/>
    <property type="match status" value="1"/>
</dbReference>
<dbReference type="InterPro" id="IPR013785">
    <property type="entry name" value="Aldolase_TIM"/>
</dbReference>
<dbReference type="InterPro" id="IPR004569">
    <property type="entry name" value="PyrdxlP_synth_PdxJ"/>
</dbReference>
<dbReference type="InterPro" id="IPR036130">
    <property type="entry name" value="Pyridoxine-5'_phos_synth"/>
</dbReference>
<dbReference type="NCBIfam" id="TIGR00559">
    <property type="entry name" value="pdxJ"/>
    <property type="match status" value="1"/>
</dbReference>
<dbReference type="NCBIfam" id="NF003625">
    <property type="entry name" value="PRK05265.1-3"/>
    <property type="match status" value="1"/>
</dbReference>
<dbReference type="NCBIfam" id="NF003627">
    <property type="entry name" value="PRK05265.1-5"/>
    <property type="match status" value="1"/>
</dbReference>
<dbReference type="PANTHER" id="PTHR30456">
    <property type="entry name" value="PYRIDOXINE 5'-PHOSPHATE SYNTHASE"/>
    <property type="match status" value="1"/>
</dbReference>
<dbReference type="PANTHER" id="PTHR30456:SF0">
    <property type="entry name" value="PYRIDOXINE 5'-PHOSPHATE SYNTHASE"/>
    <property type="match status" value="1"/>
</dbReference>
<dbReference type="Pfam" id="PF03740">
    <property type="entry name" value="PdxJ"/>
    <property type="match status" value="1"/>
</dbReference>
<dbReference type="SUPFAM" id="SSF63892">
    <property type="entry name" value="Pyridoxine 5'-phosphate synthase"/>
    <property type="match status" value="1"/>
</dbReference>
<name>PDXJ_EHRRG</name>
<keyword id="KW-0963">Cytoplasm</keyword>
<keyword id="KW-0664">Pyridoxine biosynthesis</keyword>
<keyword id="KW-0808">Transferase</keyword>
<organism>
    <name type="scientific">Ehrlichia ruminantium (strain Gardel)</name>
    <dbReference type="NCBI Taxonomy" id="302409"/>
    <lineage>
        <taxon>Bacteria</taxon>
        <taxon>Pseudomonadati</taxon>
        <taxon>Pseudomonadota</taxon>
        <taxon>Alphaproteobacteria</taxon>
        <taxon>Rickettsiales</taxon>
        <taxon>Anaplasmataceae</taxon>
        <taxon>Ehrlichia</taxon>
    </lineage>
</organism>
<feature type="chain" id="PRO_0000231805" description="Pyridoxine 5'-phosphate synthase">
    <location>
        <begin position="1"/>
        <end position="238"/>
    </location>
</feature>
<feature type="active site" description="Proton acceptor" evidence="1">
    <location>
        <position position="45"/>
    </location>
</feature>
<feature type="active site" description="Proton acceptor" evidence="1">
    <location>
        <position position="72"/>
    </location>
</feature>
<feature type="active site" description="Proton donor" evidence="1">
    <location>
        <position position="189"/>
    </location>
</feature>
<feature type="binding site" evidence="1">
    <location>
        <position position="9"/>
    </location>
    <ligand>
        <name>3-amino-2-oxopropyl phosphate</name>
        <dbReference type="ChEBI" id="CHEBI:57279"/>
    </ligand>
</feature>
<feature type="binding site" evidence="1">
    <location>
        <begin position="11"/>
        <end position="12"/>
    </location>
    <ligand>
        <name>1-deoxy-D-xylulose 5-phosphate</name>
        <dbReference type="ChEBI" id="CHEBI:57792"/>
    </ligand>
</feature>
<feature type="binding site" evidence="1">
    <location>
        <position position="20"/>
    </location>
    <ligand>
        <name>3-amino-2-oxopropyl phosphate</name>
        <dbReference type="ChEBI" id="CHEBI:57279"/>
    </ligand>
</feature>
<feature type="binding site" evidence="1">
    <location>
        <position position="47"/>
    </location>
    <ligand>
        <name>1-deoxy-D-xylulose 5-phosphate</name>
        <dbReference type="ChEBI" id="CHEBI:57792"/>
    </ligand>
</feature>
<feature type="binding site" evidence="1">
    <location>
        <position position="52"/>
    </location>
    <ligand>
        <name>1-deoxy-D-xylulose 5-phosphate</name>
        <dbReference type="ChEBI" id="CHEBI:57792"/>
    </ligand>
</feature>
<feature type="binding site" evidence="1">
    <location>
        <position position="102"/>
    </location>
    <ligand>
        <name>1-deoxy-D-xylulose 5-phosphate</name>
        <dbReference type="ChEBI" id="CHEBI:57792"/>
    </ligand>
</feature>
<feature type="binding site" evidence="1">
    <location>
        <position position="190"/>
    </location>
    <ligand>
        <name>3-amino-2-oxopropyl phosphate</name>
        <dbReference type="ChEBI" id="CHEBI:57279"/>
    </ligand>
</feature>
<feature type="binding site" evidence="1">
    <location>
        <begin position="211"/>
        <end position="212"/>
    </location>
    <ligand>
        <name>3-amino-2-oxopropyl phosphate</name>
        <dbReference type="ChEBI" id="CHEBI:57279"/>
    </ligand>
</feature>
<feature type="site" description="Transition state stabilizer" evidence="1">
    <location>
        <position position="153"/>
    </location>
</feature>
<evidence type="ECO:0000255" key="1">
    <source>
        <dbReference type="HAMAP-Rule" id="MF_00279"/>
    </source>
</evidence>
<protein>
    <recommendedName>
        <fullName evidence="1">Pyridoxine 5'-phosphate synthase</fullName>
        <shortName evidence="1">PNP synthase</shortName>
        <ecNumber evidence="1">2.6.99.2</ecNumber>
    </recommendedName>
</protein>
<comment type="function">
    <text evidence="1">Catalyzes the complicated ring closure reaction between the two acyclic compounds 1-deoxy-D-xylulose-5-phosphate (DXP) and 3-amino-2-oxopropyl phosphate (1-amino-acetone-3-phosphate or AAP) to form pyridoxine 5'-phosphate (PNP) and inorganic phosphate.</text>
</comment>
<comment type="catalytic activity">
    <reaction evidence="1">
        <text>3-amino-2-oxopropyl phosphate + 1-deoxy-D-xylulose 5-phosphate = pyridoxine 5'-phosphate + phosphate + 2 H2O + H(+)</text>
        <dbReference type="Rhea" id="RHEA:15265"/>
        <dbReference type="ChEBI" id="CHEBI:15377"/>
        <dbReference type="ChEBI" id="CHEBI:15378"/>
        <dbReference type="ChEBI" id="CHEBI:43474"/>
        <dbReference type="ChEBI" id="CHEBI:57279"/>
        <dbReference type="ChEBI" id="CHEBI:57792"/>
        <dbReference type="ChEBI" id="CHEBI:58589"/>
        <dbReference type="EC" id="2.6.99.2"/>
    </reaction>
</comment>
<comment type="pathway">
    <text evidence="1">Cofactor biosynthesis; pyridoxine 5'-phosphate biosynthesis; pyridoxine 5'-phosphate from D-erythrose 4-phosphate: step 5/5.</text>
</comment>
<comment type="subunit">
    <text evidence="1">Homooctamer; tetramer of dimers.</text>
</comment>
<comment type="subcellular location">
    <subcellularLocation>
        <location evidence="1">Cytoplasm</location>
    </subcellularLocation>
</comment>
<comment type="similarity">
    <text evidence="1">Belongs to the PNP synthase family.</text>
</comment>
<accession>Q5FHH4</accession>
<sequence>MSSIALGVNIDHIATLRNARNTEYPDLVEIANIAVNNGADFITVHLREDRRHIRDSDVFRLKDNLNVPLNLEIAAIDEMLAIAIAVQPECVCLVPEKRQELTTEGGLDVKNMFTYLMPFVTQLHNHNIKVTLFVEPDINQINYAKKLSVDNIELHTGVYCNHNTQNELNRILEAAKHCYTNKIECHAGHGLDYQSAATIARVPYISALNIGHFLICEAVLHGIGTSIYKMKKVITNPL</sequence>